<protein>
    <recommendedName>
        <fullName evidence="1">NAD(P)H-quinone oxidoreductase subunit 1</fullName>
        <ecNumber evidence="1">7.1.1.-</ecNumber>
    </recommendedName>
    <alternativeName>
        <fullName evidence="1">NAD(P)H dehydrogenase I subunit 1</fullName>
    </alternativeName>
    <alternativeName>
        <fullName evidence="1">NDH-1 subunit 1</fullName>
    </alternativeName>
    <alternativeName>
        <fullName evidence="1">NDH-A</fullName>
    </alternativeName>
</protein>
<accession>Q7U402</accession>
<sequence>MVSPGLDLELSFSQALQGFGLSEQAARLLWLPLPMLLVLVAAVVGVLVSVWLERKISAAVQQRIGPEYAGALGVLQPLADGLKLLVKEDIIPARADSLLFTLGPVLVVIPVIISWLIIPFGQNLLISNVGVGIFLWIAFSSIQPIGLLMSGYASNNKYSLLGGLRAAAQSISYEIPLALAVLAIVMMSNSLSTVDIVGQQTGAGILSWNIWRQPVGFLIFWICALAECERLPFDLPEAEEELVAGYQTEYAGMKFALFYLAGYINLVLSAVLVSVLYLGGWGFPIPVEWLAGWLNQPIDAPVIQVITGSVGIVMTVLKAYLLVFVAILLRWTTPRVRIDQLLDLGWKFLLPLSLVNLLVTAALKLAFPVAFGG</sequence>
<dbReference type="EC" id="7.1.1.-" evidence="1"/>
<dbReference type="EMBL" id="BX569695">
    <property type="protein sequence ID" value="CAE08789.1"/>
    <property type="molecule type" value="Genomic_DNA"/>
</dbReference>
<dbReference type="SMR" id="Q7U402"/>
<dbReference type="STRING" id="84588.SYNW2274"/>
<dbReference type="KEGG" id="syw:SYNW2274"/>
<dbReference type="eggNOG" id="COG1005">
    <property type="taxonomic scope" value="Bacteria"/>
</dbReference>
<dbReference type="HOGENOM" id="CLU_015134_0_1_3"/>
<dbReference type="BioCyc" id="MetaCyc:TX72_RS11470-MONOMER"/>
<dbReference type="Proteomes" id="UP000001422">
    <property type="component" value="Chromosome"/>
</dbReference>
<dbReference type="GO" id="GO:0031676">
    <property type="term" value="C:plasma membrane-derived thylakoid membrane"/>
    <property type="evidence" value="ECO:0007669"/>
    <property type="project" value="UniProtKB-SubCell"/>
</dbReference>
<dbReference type="GO" id="GO:0003954">
    <property type="term" value="F:NADH dehydrogenase activity"/>
    <property type="evidence" value="ECO:0007669"/>
    <property type="project" value="TreeGrafter"/>
</dbReference>
<dbReference type="GO" id="GO:0016655">
    <property type="term" value="F:oxidoreductase activity, acting on NAD(P)H, quinone or similar compound as acceptor"/>
    <property type="evidence" value="ECO:0007669"/>
    <property type="project" value="UniProtKB-UniRule"/>
</dbReference>
<dbReference type="GO" id="GO:0048038">
    <property type="term" value="F:quinone binding"/>
    <property type="evidence" value="ECO:0007669"/>
    <property type="project" value="UniProtKB-KW"/>
</dbReference>
<dbReference type="GO" id="GO:0009060">
    <property type="term" value="P:aerobic respiration"/>
    <property type="evidence" value="ECO:0007669"/>
    <property type="project" value="TreeGrafter"/>
</dbReference>
<dbReference type="GO" id="GO:0019684">
    <property type="term" value="P:photosynthesis, light reaction"/>
    <property type="evidence" value="ECO:0007669"/>
    <property type="project" value="UniProtKB-UniRule"/>
</dbReference>
<dbReference type="HAMAP" id="MF_01350">
    <property type="entry name" value="NDH1_NuoH"/>
    <property type="match status" value="1"/>
</dbReference>
<dbReference type="InterPro" id="IPR001694">
    <property type="entry name" value="NADH_UbQ_OxRdtase_su1/FPO"/>
</dbReference>
<dbReference type="InterPro" id="IPR018086">
    <property type="entry name" value="NADH_UbQ_OxRdtase_su1_CS"/>
</dbReference>
<dbReference type="NCBIfam" id="NF004741">
    <property type="entry name" value="PRK06076.1-2"/>
    <property type="match status" value="1"/>
</dbReference>
<dbReference type="NCBIfam" id="NF004744">
    <property type="entry name" value="PRK06076.1-5"/>
    <property type="match status" value="1"/>
</dbReference>
<dbReference type="PANTHER" id="PTHR11432">
    <property type="entry name" value="NADH DEHYDROGENASE SUBUNIT 1"/>
    <property type="match status" value="1"/>
</dbReference>
<dbReference type="PANTHER" id="PTHR11432:SF3">
    <property type="entry name" value="NADH-UBIQUINONE OXIDOREDUCTASE CHAIN 1"/>
    <property type="match status" value="1"/>
</dbReference>
<dbReference type="Pfam" id="PF00146">
    <property type="entry name" value="NADHdh"/>
    <property type="match status" value="1"/>
</dbReference>
<dbReference type="PROSITE" id="PS00667">
    <property type="entry name" value="COMPLEX1_ND1_1"/>
    <property type="match status" value="1"/>
</dbReference>
<dbReference type="PROSITE" id="PS00668">
    <property type="entry name" value="COMPLEX1_ND1_2"/>
    <property type="match status" value="1"/>
</dbReference>
<organism>
    <name type="scientific">Parasynechococcus marenigrum (strain WH8102)</name>
    <dbReference type="NCBI Taxonomy" id="84588"/>
    <lineage>
        <taxon>Bacteria</taxon>
        <taxon>Bacillati</taxon>
        <taxon>Cyanobacteriota</taxon>
        <taxon>Cyanophyceae</taxon>
        <taxon>Synechococcales</taxon>
        <taxon>Prochlorococcaceae</taxon>
        <taxon>Parasynechococcus</taxon>
        <taxon>Parasynechococcus marenigrum</taxon>
    </lineage>
</organism>
<proteinExistence type="inferred from homology"/>
<name>NU1C_PARMW</name>
<feature type="chain" id="PRO_0000240049" description="NAD(P)H-quinone oxidoreductase subunit 1">
    <location>
        <begin position="1"/>
        <end position="373"/>
    </location>
</feature>
<feature type="transmembrane region" description="Helical" evidence="1">
    <location>
        <begin position="28"/>
        <end position="48"/>
    </location>
</feature>
<feature type="transmembrane region" description="Helical" evidence="1">
    <location>
        <begin position="98"/>
        <end position="118"/>
    </location>
</feature>
<feature type="transmembrane region" description="Helical" evidence="1">
    <location>
        <begin position="129"/>
        <end position="149"/>
    </location>
</feature>
<feature type="transmembrane region" description="Helical" evidence="1">
    <location>
        <begin position="167"/>
        <end position="187"/>
    </location>
</feature>
<feature type="transmembrane region" description="Helical" evidence="1">
    <location>
        <begin position="205"/>
        <end position="225"/>
    </location>
</feature>
<feature type="transmembrane region" description="Helical" evidence="1">
    <location>
        <begin position="267"/>
        <end position="287"/>
    </location>
</feature>
<feature type="transmembrane region" description="Helical" evidence="1">
    <location>
        <begin position="309"/>
        <end position="329"/>
    </location>
</feature>
<feature type="transmembrane region" description="Helical" evidence="1">
    <location>
        <begin position="348"/>
        <end position="368"/>
    </location>
</feature>
<keyword id="KW-0472">Membrane</keyword>
<keyword id="KW-0520">NAD</keyword>
<keyword id="KW-0521">NADP</keyword>
<keyword id="KW-0618">Plastoquinone</keyword>
<keyword id="KW-0874">Quinone</keyword>
<keyword id="KW-0793">Thylakoid</keyword>
<keyword id="KW-1278">Translocase</keyword>
<keyword id="KW-0812">Transmembrane</keyword>
<keyword id="KW-1133">Transmembrane helix</keyword>
<reference key="1">
    <citation type="journal article" date="2003" name="Nature">
        <title>The genome of a motile marine Synechococcus.</title>
        <authorList>
            <person name="Palenik B."/>
            <person name="Brahamsha B."/>
            <person name="Larimer F.W."/>
            <person name="Land M.L."/>
            <person name="Hauser L."/>
            <person name="Chain P."/>
            <person name="Lamerdin J.E."/>
            <person name="Regala W."/>
            <person name="Allen E.E."/>
            <person name="McCarren J."/>
            <person name="Paulsen I.T."/>
            <person name="Dufresne A."/>
            <person name="Partensky F."/>
            <person name="Webb E.A."/>
            <person name="Waterbury J."/>
        </authorList>
    </citation>
    <scope>NUCLEOTIDE SEQUENCE [LARGE SCALE GENOMIC DNA]</scope>
    <source>
        <strain>WH8102</strain>
    </source>
</reference>
<gene>
    <name evidence="1" type="primary">ndhA</name>
    <name type="ordered locus">SYNW2274</name>
</gene>
<comment type="function">
    <text evidence="1">NDH-1 shuttles electrons from an unknown electron donor, via FMN and iron-sulfur (Fe-S) centers, to quinones in the respiratory and/or the photosynthetic chain. The immediate electron acceptor for the enzyme in this species is believed to be plastoquinone. Couples the redox reaction to proton translocation, and thus conserves the redox energy in a proton gradient.</text>
</comment>
<comment type="catalytic activity">
    <reaction evidence="1">
        <text>a plastoquinone + NADH + (n+1) H(+)(in) = a plastoquinol + NAD(+) + n H(+)(out)</text>
        <dbReference type="Rhea" id="RHEA:42608"/>
        <dbReference type="Rhea" id="RHEA-COMP:9561"/>
        <dbReference type="Rhea" id="RHEA-COMP:9562"/>
        <dbReference type="ChEBI" id="CHEBI:15378"/>
        <dbReference type="ChEBI" id="CHEBI:17757"/>
        <dbReference type="ChEBI" id="CHEBI:57540"/>
        <dbReference type="ChEBI" id="CHEBI:57945"/>
        <dbReference type="ChEBI" id="CHEBI:62192"/>
    </reaction>
</comment>
<comment type="catalytic activity">
    <reaction evidence="1">
        <text>a plastoquinone + NADPH + (n+1) H(+)(in) = a plastoquinol + NADP(+) + n H(+)(out)</text>
        <dbReference type="Rhea" id="RHEA:42612"/>
        <dbReference type="Rhea" id="RHEA-COMP:9561"/>
        <dbReference type="Rhea" id="RHEA-COMP:9562"/>
        <dbReference type="ChEBI" id="CHEBI:15378"/>
        <dbReference type="ChEBI" id="CHEBI:17757"/>
        <dbReference type="ChEBI" id="CHEBI:57783"/>
        <dbReference type="ChEBI" id="CHEBI:58349"/>
        <dbReference type="ChEBI" id="CHEBI:62192"/>
    </reaction>
</comment>
<comment type="subunit">
    <text evidence="1">NDH-1 is composed of at least 11 different subunits.</text>
</comment>
<comment type="subcellular location">
    <subcellularLocation>
        <location evidence="1">Cellular thylakoid membrane</location>
        <topology evidence="1">Multi-pass membrane protein</topology>
    </subcellularLocation>
</comment>
<comment type="similarity">
    <text evidence="1">Belongs to the complex I subunit 1 family.</text>
</comment>
<evidence type="ECO:0000255" key="1">
    <source>
        <dbReference type="HAMAP-Rule" id="MF_01350"/>
    </source>
</evidence>